<name>TATA_BRUSI</name>
<reference key="1">
    <citation type="submission" date="2007-12" db="EMBL/GenBank/DDBJ databases">
        <title>Brucella suis ATCC 23445 whole genome shotgun sequencing project.</title>
        <authorList>
            <person name="Setubal J.C."/>
            <person name="Bowns C."/>
            <person name="Boyle S."/>
            <person name="Crasta O.R."/>
            <person name="Czar M.J."/>
            <person name="Dharmanolla C."/>
            <person name="Gillespie J.J."/>
            <person name="Kenyon R.W."/>
            <person name="Lu J."/>
            <person name="Mane S."/>
            <person name="Mohapatra S."/>
            <person name="Nagrani S."/>
            <person name="Purkayastha A."/>
            <person name="Rajasimha H.K."/>
            <person name="Shallom J.M."/>
            <person name="Shallom S."/>
            <person name="Shukla M."/>
            <person name="Snyder E.E."/>
            <person name="Sobral B.W."/>
            <person name="Wattam A.R."/>
            <person name="Will R."/>
            <person name="Williams K."/>
            <person name="Yoo H."/>
            <person name="Bruce D."/>
            <person name="Detter C."/>
            <person name="Munk C."/>
            <person name="Brettin T.S."/>
        </authorList>
    </citation>
    <scope>NUCLEOTIDE SEQUENCE [LARGE SCALE GENOMIC DNA]</scope>
    <source>
        <strain>ATCC 23445 / NCTC 10510</strain>
    </source>
</reference>
<evidence type="ECO:0000255" key="1">
    <source>
        <dbReference type="HAMAP-Rule" id="MF_00236"/>
    </source>
</evidence>
<evidence type="ECO:0000256" key="2">
    <source>
        <dbReference type="SAM" id="MobiDB-lite"/>
    </source>
</evidence>
<organism>
    <name type="scientific">Brucella suis (strain ATCC 23445 / NCTC 10510)</name>
    <dbReference type="NCBI Taxonomy" id="470137"/>
    <lineage>
        <taxon>Bacteria</taxon>
        <taxon>Pseudomonadati</taxon>
        <taxon>Pseudomonadota</taxon>
        <taxon>Alphaproteobacteria</taxon>
        <taxon>Hyphomicrobiales</taxon>
        <taxon>Brucellaceae</taxon>
        <taxon>Brucella/Ochrobactrum group</taxon>
        <taxon>Brucella</taxon>
    </lineage>
</organism>
<accession>B0CLK7</accession>
<protein>
    <recommendedName>
        <fullName evidence="1">Sec-independent protein translocase protein TatA</fullName>
    </recommendedName>
</protein>
<gene>
    <name evidence="1" type="primary">tatA</name>
    <name type="ordered locus">BSUIS_A0920</name>
</gene>
<sequence>MGSFSIWHWLIVLAVVLLLFGRGKIPELMGDVAKGIKNFKQGMADEDAKEDPRTIDAKAEEPVKDVKKTTKS</sequence>
<dbReference type="EMBL" id="CP000911">
    <property type="protein sequence ID" value="ABY37987.1"/>
    <property type="molecule type" value="Genomic_DNA"/>
</dbReference>
<dbReference type="RefSeq" id="WP_002964012.1">
    <property type="nucleotide sequence ID" value="NC_010169.1"/>
</dbReference>
<dbReference type="SMR" id="B0CLK7"/>
<dbReference type="KEGG" id="bmt:BSUIS_A0920"/>
<dbReference type="HOGENOM" id="CLU_086034_5_0_5"/>
<dbReference type="Proteomes" id="UP000008545">
    <property type="component" value="Chromosome I"/>
</dbReference>
<dbReference type="GO" id="GO:0033281">
    <property type="term" value="C:TAT protein transport complex"/>
    <property type="evidence" value="ECO:0007669"/>
    <property type="project" value="UniProtKB-UniRule"/>
</dbReference>
<dbReference type="GO" id="GO:0008320">
    <property type="term" value="F:protein transmembrane transporter activity"/>
    <property type="evidence" value="ECO:0007669"/>
    <property type="project" value="UniProtKB-UniRule"/>
</dbReference>
<dbReference type="GO" id="GO:0043953">
    <property type="term" value="P:protein transport by the Tat complex"/>
    <property type="evidence" value="ECO:0007669"/>
    <property type="project" value="UniProtKB-UniRule"/>
</dbReference>
<dbReference type="Gene3D" id="1.20.5.3310">
    <property type="match status" value="1"/>
</dbReference>
<dbReference type="HAMAP" id="MF_00236">
    <property type="entry name" value="TatA_E"/>
    <property type="match status" value="1"/>
</dbReference>
<dbReference type="InterPro" id="IPR003369">
    <property type="entry name" value="TatA/B/E"/>
</dbReference>
<dbReference type="InterPro" id="IPR006312">
    <property type="entry name" value="TatA/E"/>
</dbReference>
<dbReference type="NCBIfam" id="NF001940">
    <property type="entry name" value="PRK00720.1"/>
    <property type="match status" value="1"/>
</dbReference>
<dbReference type="NCBIfam" id="TIGR01411">
    <property type="entry name" value="tatAE"/>
    <property type="match status" value="1"/>
</dbReference>
<dbReference type="PANTHER" id="PTHR42982">
    <property type="entry name" value="SEC-INDEPENDENT PROTEIN TRANSLOCASE PROTEIN TATA"/>
    <property type="match status" value="1"/>
</dbReference>
<dbReference type="PANTHER" id="PTHR42982:SF1">
    <property type="entry name" value="SEC-INDEPENDENT PROTEIN TRANSLOCASE PROTEIN TATA"/>
    <property type="match status" value="1"/>
</dbReference>
<dbReference type="Pfam" id="PF02416">
    <property type="entry name" value="TatA_B_E"/>
    <property type="match status" value="1"/>
</dbReference>
<keyword id="KW-0997">Cell inner membrane</keyword>
<keyword id="KW-1003">Cell membrane</keyword>
<keyword id="KW-0472">Membrane</keyword>
<keyword id="KW-0653">Protein transport</keyword>
<keyword id="KW-0811">Translocation</keyword>
<keyword id="KW-0812">Transmembrane</keyword>
<keyword id="KW-1133">Transmembrane helix</keyword>
<keyword id="KW-0813">Transport</keyword>
<proteinExistence type="inferred from homology"/>
<comment type="function">
    <text evidence="1">Part of the twin-arginine translocation (Tat) system that transports large folded proteins containing a characteristic twin-arginine motif in their signal peptide across membranes. TatA could form the protein-conducting channel of the Tat system.</text>
</comment>
<comment type="subunit">
    <text evidence="1">The Tat system comprises two distinct complexes: a TatABC complex, containing multiple copies of TatA, TatB and TatC subunits, and a separate TatA complex, containing only TatA subunits. Substrates initially bind to the TatABC complex, which probably triggers association of the separate TatA complex to form the active translocon.</text>
</comment>
<comment type="subcellular location">
    <subcellularLocation>
        <location evidence="1">Cell inner membrane</location>
        <topology evidence="1">Single-pass membrane protein</topology>
    </subcellularLocation>
</comment>
<comment type="similarity">
    <text evidence="1">Belongs to the TatA/E family.</text>
</comment>
<feature type="chain" id="PRO_1000078299" description="Sec-independent protein translocase protein TatA">
    <location>
        <begin position="1"/>
        <end position="72"/>
    </location>
</feature>
<feature type="transmembrane region" description="Helical" evidence="1">
    <location>
        <begin position="1"/>
        <end position="21"/>
    </location>
</feature>
<feature type="region of interest" description="Disordered" evidence="2">
    <location>
        <begin position="43"/>
        <end position="72"/>
    </location>
</feature>
<feature type="compositionally biased region" description="Basic and acidic residues" evidence="2">
    <location>
        <begin position="50"/>
        <end position="72"/>
    </location>
</feature>